<proteinExistence type="inferred from homology"/>
<gene>
    <name type="ordered locus">Pmob_0702</name>
</gene>
<name>Y702_PETMO</name>
<comment type="similarity">
    <text evidence="1">Belongs to the UPF0102 family.</text>
</comment>
<reference key="1">
    <citation type="submission" date="2007-11" db="EMBL/GenBank/DDBJ databases">
        <title>Complete sequence of Petroga mobilis SJ95.</title>
        <authorList>
            <consortium name="US DOE Joint Genome Institute"/>
            <person name="Copeland A."/>
            <person name="Lucas S."/>
            <person name="Lapidus A."/>
            <person name="Barry K."/>
            <person name="Glavina del Rio T."/>
            <person name="Dalin E."/>
            <person name="Tice H."/>
            <person name="Pitluck S."/>
            <person name="Meincke L."/>
            <person name="Brettin T."/>
            <person name="Bruce D."/>
            <person name="Detter J.C."/>
            <person name="Han C."/>
            <person name="Kuske C.R."/>
            <person name="Schmutz J."/>
            <person name="Larimer F."/>
            <person name="Land M."/>
            <person name="Hauser L."/>
            <person name="Kyrpides N."/>
            <person name="Mikhailova N."/>
            <person name="Noll K."/>
            <person name="Richardson P."/>
        </authorList>
    </citation>
    <scope>NUCLEOTIDE SEQUENCE [LARGE SCALE GENOMIC DNA]</scope>
    <source>
        <strain>DSM 10674 / SJ95</strain>
    </source>
</reference>
<dbReference type="EMBL" id="CP000879">
    <property type="protein sequence ID" value="ABX31427.1"/>
    <property type="molecule type" value="Genomic_DNA"/>
</dbReference>
<dbReference type="RefSeq" id="WP_012208530.1">
    <property type="nucleotide sequence ID" value="NC_010003.1"/>
</dbReference>
<dbReference type="SMR" id="A9BFT1"/>
<dbReference type="STRING" id="403833.Pmob_0702"/>
<dbReference type="KEGG" id="pmo:Pmob_0702"/>
<dbReference type="eggNOG" id="COG0792">
    <property type="taxonomic scope" value="Bacteria"/>
</dbReference>
<dbReference type="HOGENOM" id="CLU_115353_3_1_0"/>
<dbReference type="Proteomes" id="UP000000789">
    <property type="component" value="Chromosome"/>
</dbReference>
<dbReference type="GO" id="GO:0003676">
    <property type="term" value="F:nucleic acid binding"/>
    <property type="evidence" value="ECO:0007669"/>
    <property type="project" value="InterPro"/>
</dbReference>
<dbReference type="Gene3D" id="3.40.1350.10">
    <property type="match status" value="1"/>
</dbReference>
<dbReference type="HAMAP" id="MF_00048">
    <property type="entry name" value="UPF0102"/>
    <property type="match status" value="1"/>
</dbReference>
<dbReference type="InterPro" id="IPR011335">
    <property type="entry name" value="Restrct_endonuc-II-like"/>
</dbReference>
<dbReference type="InterPro" id="IPR011856">
    <property type="entry name" value="tRNA_endonuc-like_dom_sf"/>
</dbReference>
<dbReference type="InterPro" id="IPR003509">
    <property type="entry name" value="UPF0102_YraN-like"/>
</dbReference>
<dbReference type="PANTHER" id="PTHR34039">
    <property type="entry name" value="UPF0102 PROTEIN YRAN"/>
    <property type="match status" value="1"/>
</dbReference>
<dbReference type="PANTHER" id="PTHR34039:SF1">
    <property type="entry name" value="UPF0102 PROTEIN YRAN"/>
    <property type="match status" value="1"/>
</dbReference>
<dbReference type="Pfam" id="PF02021">
    <property type="entry name" value="UPF0102"/>
    <property type="match status" value="1"/>
</dbReference>
<dbReference type="SUPFAM" id="SSF52980">
    <property type="entry name" value="Restriction endonuclease-like"/>
    <property type="match status" value="1"/>
</dbReference>
<evidence type="ECO:0000255" key="1">
    <source>
        <dbReference type="HAMAP-Rule" id="MF_00048"/>
    </source>
</evidence>
<organism>
    <name type="scientific">Petrotoga mobilis (strain DSM 10674 / SJ95)</name>
    <dbReference type="NCBI Taxonomy" id="403833"/>
    <lineage>
        <taxon>Bacteria</taxon>
        <taxon>Thermotogati</taxon>
        <taxon>Thermotogota</taxon>
        <taxon>Thermotogae</taxon>
        <taxon>Petrotogales</taxon>
        <taxon>Petrotogaceae</taxon>
        <taxon>Petrotoga</taxon>
    </lineage>
</organism>
<feature type="chain" id="PRO_0000336220" description="UPF0102 protein Pmob_0702">
    <location>
        <begin position="1"/>
        <end position="112"/>
    </location>
</feature>
<accession>A9BFT1</accession>
<protein>
    <recommendedName>
        <fullName evidence="1">UPF0102 protein Pmob_0702</fullName>
    </recommendedName>
</protein>
<sequence length="112" mass="13008">MNTKGKVYEDKAVSFFLNRDYRIIARNFSYRHGEIDIIALKNKILHLIEVKGGKETFGDPAFRVNSRKLKKIMKVGNYFIATHPKLEFDEIQIDVISVTNDGVINYYPAQRL</sequence>